<proteinExistence type="inferred from homology"/>
<sequence length="310" mass="34761">MKTLIRKFSRTAITVVLVILAFIAIFNAWVYYTESPWTRDARFSADVVAIAPDVSGLITQVNVHDNQLVKKGQVLFTIDQPRYQKALEEAQADVAYYQVLAQEKRQEAGRRNRLGVQAMSREEIDQANNVLQTVLHQLAKAQATRDLAKLDLERTVIRAPADGWVTNLNVYTGEFITRGSTAVALVKQNSFYVLAYMEETKLEGVRPGYRAEITPLGSNKVLKGTVDSVAAGVTNASSTRDDKGMATIDSNLEWVRLAQRVPVRIRLDNQQENIWPAGTTATVVVTGKQDRDESQDSFFRKMAHRLREFG</sequence>
<feature type="chain" id="PRO_0000300553" description="p-hydroxybenzoic acid efflux pump subunit AaeA">
    <location>
        <begin position="1"/>
        <end position="310"/>
    </location>
</feature>
<feature type="transmembrane region" description="Helical" evidence="1">
    <location>
        <begin position="12"/>
        <end position="32"/>
    </location>
</feature>
<gene>
    <name evidence="1" type="primary">aaeA</name>
    <name type="ordered locus">Ecok1_32300</name>
    <name type="ORF">APECO1_3203</name>
</gene>
<keyword id="KW-0997">Cell inner membrane</keyword>
<keyword id="KW-1003">Cell membrane</keyword>
<keyword id="KW-0472">Membrane</keyword>
<keyword id="KW-1185">Reference proteome</keyword>
<keyword id="KW-0812">Transmembrane</keyword>
<keyword id="KW-1133">Transmembrane helix</keyword>
<keyword id="KW-0813">Transport</keyword>
<evidence type="ECO:0000255" key="1">
    <source>
        <dbReference type="HAMAP-Rule" id="MF_01544"/>
    </source>
</evidence>
<dbReference type="EMBL" id="CP000468">
    <property type="protein sequence ID" value="ABJ02724.1"/>
    <property type="molecule type" value="Genomic_DNA"/>
</dbReference>
<dbReference type="RefSeq" id="WP_000854033.1">
    <property type="nucleotide sequence ID" value="NZ_CADILS010000003.1"/>
</dbReference>
<dbReference type="SMR" id="A1AGD4"/>
<dbReference type="KEGG" id="ecv:APECO1_3203"/>
<dbReference type="HOGENOM" id="CLU_018816_15_2_6"/>
<dbReference type="Proteomes" id="UP000008216">
    <property type="component" value="Chromosome"/>
</dbReference>
<dbReference type="GO" id="GO:0005886">
    <property type="term" value="C:plasma membrane"/>
    <property type="evidence" value="ECO:0007669"/>
    <property type="project" value="UniProtKB-SubCell"/>
</dbReference>
<dbReference type="GO" id="GO:0022857">
    <property type="term" value="F:transmembrane transporter activity"/>
    <property type="evidence" value="ECO:0007669"/>
    <property type="project" value="UniProtKB-UniRule"/>
</dbReference>
<dbReference type="FunFam" id="2.40.30.170:FF:000002">
    <property type="entry name" value="p-hydroxybenzoic acid efflux pump subunit AaeA"/>
    <property type="match status" value="1"/>
</dbReference>
<dbReference type="FunFam" id="2.40.50.100:FF:000018">
    <property type="entry name" value="p-hydroxybenzoic acid efflux pump subunit AaeA"/>
    <property type="match status" value="1"/>
</dbReference>
<dbReference type="Gene3D" id="2.40.30.170">
    <property type="match status" value="1"/>
</dbReference>
<dbReference type="Gene3D" id="2.40.50.100">
    <property type="match status" value="1"/>
</dbReference>
<dbReference type="HAMAP" id="MF_01544">
    <property type="entry name" value="AaeA"/>
    <property type="match status" value="1"/>
</dbReference>
<dbReference type="InterPro" id="IPR043602">
    <property type="entry name" value="CusB-like_dom_1"/>
</dbReference>
<dbReference type="InterPro" id="IPR032317">
    <property type="entry name" value="CusB_D23"/>
</dbReference>
<dbReference type="InterPro" id="IPR050393">
    <property type="entry name" value="MFP_Efflux_Pump"/>
</dbReference>
<dbReference type="InterPro" id="IPR022871">
    <property type="entry name" value="PHBA_efflux_pump_AaeA"/>
</dbReference>
<dbReference type="InterPro" id="IPR006143">
    <property type="entry name" value="RND_pump_MFP"/>
</dbReference>
<dbReference type="NCBIfam" id="NF007850">
    <property type="entry name" value="PRK10559.1"/>
    <property type="match status" value="1"/>
</dbReference>
<dbReference type="NCBIfam" id="TIGR01730">
    <property type="entry name" value="RND_mfp"/>
    <property type="match status" value="1"/>
</dbReference>
<dbReference type="PANTHER" id="PTHR30367:SF12">
    <property type="entry name" value="P-HYDROXYBENZOIC ACID EFFLUX PUMP SUBUNIT AAEA"/>
    <property type="match status" value="1"/>
</dbReference>
<dbReference type="PANTHER" id="PTHR30367">
    <property type="entry name" value="P-HYDROXYBENZOIC ACID EFFLUX PUMP SUBUNIT AAEA-RELATED"/>
    <property type="match status" value="1"/>
</dbReference>
<dbReference type="Pfam" id="PF00529">
    <property type="entry name" value="CusB_dom_1"/>
    <property type="match status" value="1"/>
</dbReference>
<dbReference type="Pfam" id="PF16576">
    <property type="entry name" value="HlyD_D23"/>
    <property type="match status" value="1"/>
</dbReference>
<dbReference type="SUPFAM" id="SSF111369">
    <property type="entry name" value="HlyD-like secretion proteins"/>
    <property type="match status" value="1"/>
</dbReference>
<reference key="1">
    <citation type="journal article" date="2007" name="J. Bacteriol.">
        <title>The genome sequence of avian pathogenic Escherichia coli strain O1:K1:H7 shares strong similarities with human extraintestinal pathogenic E. coli genomes.</title>
        <authorList>
            <person name="Johnson T.J."/>
            <person name="Kariyawasam S."/>
            <person name="Wannemuehler Y."/>
            <person name="Mangiamele P."/>
            <person name="Johnson S.J."/>
            <person name="Doetkott C."/>
            <person name="Skyberg J.A."/>
            <person name="Lynne A.M."/>
            <person name="Johnson J.R."/>
            <person name="Nolan L.K."/>
        </authorList>
    </citation>
    <scope>NUCLEOTIDE SEQUENCE [LARGE SCALE GENOMIC DNA]</scope>
</reference>
<protein>
    <recommendedName>
        <fullName evidence="1">p-hydroxybenzoic acid efflux pump subunit AaeA</fullName>
        <shortName evidence="1">pHBA efflux pump protein A</shortName>
    </recommendedName>
</protein>
<organism>
    <name type="scientific">Escherichia coli O1:K1 / APEC</name>
    <dbReference type="NCBI Taxonomy" id="405955"/>
    <lineage>
        <taxon>Bacteria</taxon>
        <taxon>Pseudomonadati</taxon>
        <taxon>Pseudomonadota</taxon>
        <taxon>Gammaproteobacteria</taxon>
        <taxon>Enterobacterales</taxon>
        <taxon>Enterobacteriaceae</taxon>
        <taxon>Escherichia</taxon>
    </lineage>
</organism>
<name>AAEA_ECOK1</name>
<comment type="function">
    <text evidence="1">Forms an efflux pump with AaeB.</text>
</comment>
<comment type="subcellular location">
    <subcellularLocation>
        <location evidence="1">Cell inner membrane</location>
        <topology evidence="1">Single-pass membrane protein</topology>
    </subcellularLocation>
</comment>
<comment type="induction">
    <text evidence="1">Positively coregulated with aaeB and aaeX by AaeR.</text>
</comment>
<comment type="similarity">
    <text evidence="1">Belongs to the membrane fusion protein (MFP) (TC 8.A.1) family.</text>
</comment>
<accession>A1AGD4</accession>